<comment type="similarity">
    <text evidence="1">Belongs to the bacterial ribosomal protein bS16 family.</text>
</comment>
<organism>
    <name type="scientific">Xanthomonas oryzae pv. oryzae (strain PXO99A)</name>
    <dbReference type="NCBI Taxonomy" id="360094"/>
    <lineage>
        <taxon>Bacteria</taxon>
        <taxon>Pseudomonadati</taxon>
        <taxon>Pseudomonadota</taxon>
        <taxon>Gammaproteobacteria</taxon>
        <taxon>Lysobacterales</taxon>
        <taxon>Lysobacteraceae</taxon>
        <taxon>Xanthomonas</taxon>
    </lineage>
</organism>
<name>RS16_XANOP</name>
<gene>
    <name evidence="1" type="primary">rpsP</name>
    <name type="ordered locus">PXO_02147</name>
</gene>
<proteinExistence type="inferred from homology"/>
<sequence>MVKIRLTRGGAKKRPFYHIIVTDVRSARDGRNIERLGYYNPVAQGAEPRVVLDTARVDHWVGNGAQLTDKVRNLYREAKSQAAAA</sequence>
<feature type="chain" id="PRO_1000122599" description="Small ribosomal subunit protein bS16">
    <location>
        <begin position="1"/>
        <end position="85"/>
    </location>
</feature>
<accession>B2SJV3</accession>
<protein>
    <recommendedName>
        <fullName evidence="1">Small ribosomal subunit protein bS16</fullName>
    </recommendedName>
    <alternativeName>
        <fullName evidence="2">30S ribosomal protein S16</fullName>
    </alternativeName>
</protein>
<reference key="1">
    <citation type="journal article" date="2008" name="BMC Genomics">
        <title>Genome sequence and rapid evolution of the rice pathogen Xanthomonas oryzae pv. oryzae PXO99A.</title>
        <authorList>
            <person name="Salzberg S.L."/>
            <person name="Sommer D.D."/>
            <person name="Schatz M.C."/>
            <person name="Phillippy A.M."/>
            <person name="Rabinowicz P.D."/>
            <person name="Tsuge S."/>
            <person name="Furutani A."/>
            <person name="Ochiai H."/>
            <person name="Delcher A.L."/>
            <person name="Kelley D."/>
            <person name="Madupu R."/>
            <person name="Puiu D."/>
            <person name="Radune D."/>
            <person name="Shumway M."/>
            <person name="Trapnell C."/>
            <person name="Aparna G."/>
            <person name="Jha G."/>
            <person name="Pandey A."/>
            <person name="Patil P.B."/>
            <person name="Ishihara H."/>
            <person name="Meyer D.F."/>
            <person name="Szurek B."/>
            <person name="Verdier V."/>
            <person name="Koebnik R."/>
            <person name="Dow J.M."/>
            <person name="Ryan R.P."/>
            <person name="Hirata H."/>
            <person name="Tsuyumu S."/>
            <person name="Won Lee S."/>
            <person name="Seo Y.-S."/>
            <person name="Sriariyanum M."/>
            <person name="Ronald P.C."/>
            <person name="Sonti R.V."/>
            <person name="Van Sluys M.-A."/>
            <person name="Leach J.E."/>
            <person name="White F.F."/>
            <person name="Bogdanove A.J."/>
        </authorList>
    </citation>
    <scope>NUCLEOTIDE SEQUENCE [LARGE SCALE GENOMIC DNA]</scope>
    <source>
        <strain>PXO99A</strain>
    </source>
</reference>
<evidence type="ECO:0000255" key="1">
    <source>
        <dbReference type="HAMAP-Rule" id="MF_00385"/>
    </source>
</evidence>
<evidence type="ECO:0000305" key="2"/>
<keyword id="KW-0687">Ribonucleoprotein</keyword>
<keyword id="KW-0689">Ribosomal protein</keyword>
<dbReference type="EMBL" id="CP000967">
    <property type="protein sequence ID" value="ACD60470.1"/>
    <property type="molecule type" value="Genomic_DNA"/>
</dbReference>
<dbReference type="RefSeq" id="WP_011258141.1">
    <property type="nucleotide sequence ID" value="NC_010717.2"/>
</dbReference>
<dbReference type="SMR" id="B2SJV3"/>
<dbReference type="GeneID" id="77336559"/>
<dbReference type="KEGG" id="xop:PXO_02147"/>
<dbReference type="eggNOG" id="COG0228">
    <property type="taxonomic scope" value="Bacteria"/>
</dbReference>
<dbReference type="HOGENOM" id="CLU_100590_5_1_6"/>
<dbReference type="Proteomes" id="UP000001740">
    <property type="component" value="Chromosome"/>
</dbReference>
<dbReference type="GO" id="GO:0005737">
    <property type="term" value="C:cytoplasm"/>
    <property type="evidence" value="ECO:0007669"/>
    <property type="project" value="UniProtKB-ARBA"/>
</dbReference>
<dbReference type="GO" id="GO:0015935">
    <property type="term" value="C:small ribosomal subunit"/>
    <property type="evidence" value="ECO:0007669"/>
    <property type="project" value="TreeGrafter"/>
</dbReference>
<dbReference type="GO" id="GO:0003735">
    <property type="term" value="F:structural constituent of ribosome"/>
    <property type="evidence" value="ECO:0007669"/>
    <property type="project" value="InterPro"/>
</dbReference>
<dbReference type="GO" id="GO:0006412">
    <property type="term" value="P:translation"/>
    <property type="evidence" value="ECO:0007669"/>
    <property type="project" value="UniProtKB-UniRule"/>
</dbReference>
<dbReference type="FunFam" id="3.30.1320.10:FF:000008">
    <property type="entry name" value="30S ribosomal protein S16"/>
    <property type="match status" value="1"/>
</dbReference>
<dbReference type="Gene3D" id="3.30.1320.10">
    <property type="match status" value="1"/>
</dbReference>
<dbReference type="HAMAP" id="MF_00385">
    <property type="entry name" value="Ribosomal_bS16"/>
    <property type="match status" value="1"/>
</dbReference>
<dbReference type="InterPro" id="IPR000307">
    <property type="entry name" value="Ribosomal_bS16"/>
</dbReference>
<dbReference type="InterPro" id="IPR020592">
    <property type="entry name" value="Ribosomal_bS16_CS"/>
</dbReference>
<dbReference type="InterPro" id="IPR023803">
    <property type="entry name" value="Ribosomal_bS16_dom_sf"/>
</dbReference>
<dbReference type="NCBIfam" id="TIGR00002">
    <property type="entry name" value="S16"/>
    <property type="match status" value="1"/>
</dbReference>
<dbReference type="PANTHER" id="PTHR12919">
    <property type="entry name" value="30S RIBOSOMAL PROTEIN S16"/>
    <property type="match status" value="1"/>
</dbReference>
<dbReference type="PANTHER" id="PTHR12919:SF20">
    <property type="entry name" value="SMALL RIBOSOMAL SUBUNIT PROTEIN BS16M"/>
    <property type="match status" value="1"/>
</dbReference>
<dbReference type="Pfam" id="PF00886">
    <property type="entry name" value="Ribosomal_S16"/>
    <property type="match status" value="1"/>
</dbReference>
<dbReference type="SUPFAM" id="SSF54565">
    <property type="entry name" value="Ribosomal protein S16"/>
    <property type="match status" value="1"/>
</dbReference>
<dbReference type="PROSITE" id="PS00732">
    <property type="entry name" value="RIBOSOMAL_S16"/>
    <property type="match status" value="1"/>
</dbReference>